<keyword id="KW-0004">4Fe-4S</keyword>
<keyword id="KW-0067">ATP-binding</keyword>
<keyword id="KW-0077">Bacteriochlorophyll biosynthesis</keyword>
<keyword id="KW-0149">Chlorophyll biosynthesis</keyword>
<keyword id="KW-0408">Iron</keyword>
<keyword id="KW-0411">Iron-sulfur</keyword>
<keyword id="KW-0479">Metal-binding</keyword>
<keyword id="KW-0547">Nucleotide-binding</keyword>
<keyword id="KW-0560">Oxidoreductase</keyword>
<keyword id="KW-0602">Photosynthesis</keyword>
<proteinExistence type="inferred from homology"/>
<dbReference type="EC" id="1.3.7.7" evidence="1"/>
<dbReference type="EMBL" id="AB017351">
    <property type="protein sequence ID" value="BAA76536.1"/>
    <property type="molecule type" value="Genomic_DNA"/>
</dbReference>
<dbReference type="SMR" id="Q9WXB4"/>
<dbReference type="STRING" id="526.SAMN05421828_10297"/>
<dbReference type="UniPathway" id="UPA00671"/>
<dbReference type="GO" id="GO:0051539">
    <property type="term" value="F:4 iron, 4 sulfur cluster binding"/>
    <property type="evidence" value="ECO:0007669"/>
    <property type="project" value="UniProtKB-UniRule"/>
</dbReference>
<dbReference type="GO" id="GO:0005524">
    <property type="term" value="F:ATP binding"/>
    <property type="evidence" value="ECO:0007669"/>
    <property type="project" value="UniProtKB-UniRule"/>
</dbReference>
<dbReference type="GO" id="GO:0046872">
    <property type="term" value="F:metal ion binding"/>
    <property type="evidence" value="ECO:0007669"/>
    <property type="project" value="UniProtKB-KW"/>
</dbReference>
<dbReference type="GO" id="GO:0016730">
    <property type="term" value="F:oxidoreductase activity, acting on iron-sulfur proteins as donors"/>
    <property type="evidence" value="ECO:0007669"/>
    <property type="project" value="InterPro"/>
</dbReference>
<dbReference type="GO" id="GO:0016636">
    <property type="term" value="F:oxidoreductase activity, acting on the CH-CH group of donors, iron-sulfur protein as acceptor"/>
    <property type="evidence" value="ECO:0007669"/>
    <property type="project" value="UniProtKB-UniRule"/>
</dbReference>
<dbReference type="GO" id="GO:0036070">
    <property type="term" value="P:light-independent bacteriochlorophyll biosynthetic process"/>
    <property type="evidence" value="ECO:0007669"/>
    <property type="project" value="UniProtKB-UniRule"/>
</dbReference>
<dbReference type="GO" id="GO:0019685">
    <property type="term" value="P:photosynthesis, dark reaction"/>
    <property type="evidence" value="ECO:0007669"/>
    <property type="project" value="InterPro"/>
</dbReference>
<dbReference type="Gene3D" id="3.40.50.1980">
    <property type="entry name" value="Nitrogenase molybdenum iron protein domain"/>
    <property type="match status" value="3"/>
</dbReference>
<dbReference type="HAMAP" id="MF_00352">
    <property type="entry name" value="ChlN_BchN"/>
    <property type="match status" value="1"/>
</dbReference>
<dbReference type="InterPro" id="IPR050293">
    <property type="entry name" value="LIPOR_BchN/ChlN"/>
</dbReference>
<dbReference type="InterPro" id="IPR000510">
    <property type="entry name" value="Nase/OxRdtase_comp1"/>
</dbReference>
<dbReference type="InterPro" id="IPR005970">
    <property type="entry name" value="Protochl_reductN"/>
</dbReference>
<dbReference type="NCBIfam" id="TIGR01279">
    <property type="entry name" value="DPOR_bchN"/>
    <property type="match status" value="1"/>
</dbReference>
<dbReference type="NCBIfam" id="NF002768">
    <property type="entry name" value="PRK02842.1"/>
    <property type="match status" value="1"/>
</dbReference>
<dbReference type="PANTHER" id="PTHR39429">
    <property type="entry name" value="LIGHT-INDEPENDENT PROTOCHLOROPHYLLIDE REDUCTASE SUBUNIT N"/>
    <property type="match status" value="1"/>
</dbReference>
<dbReference type="PANTHER" id="PTHR39429:SF3">
    <property type="entry name" value="LIGHT-INDEPENDENT PROTOCHLOROPHYLLIDE REDUCTASE SUBUNIT N"/>
    <property type="match status" value="1"/>
</dbReference>
<dbReference type="Pfam" id="PF00148">
    <property type="entry name" value="Oxidored_nitro"/>
    <property type="match status" value="1"/>
</dbReference>
<dbReference type="PIRSF" id="PIRSF000162">
    <property type="entry name" value="P_chlorophyll_rd"/>
    <property type="match status" value="1"/>
</dbReference>
<dbReference type="SUPFAM" id="SSF53807">
    <property type="entry name" value="Helical backbone' metal receptor"/>
    <property type="match status" value="1"/>
</dbReference>
<comment type="function">
    <text evidence="1">Component of the dark-operative protochlorophyllide reductase (DPOR) that uses Mg-ATP and reduced ferredoxin to reduce ring D of protochlorophyllide (Pchlide) to form chlorophyllide a (Chlide). This reaction is light-independent. The NB-protein (BchN-BchB) is the catalytic component of the complex.</text>
</comment>
<comment type="catalytic activity">
    <reaction evidence="1">
        <text>chlorophyllide a + oxidized 2[4Fe-4S]-[ferredoxin] + 2 ADP + 2 phosphate = protochlorophyllide a + reduced 2[4Fe-4S]-[ferredoxin] + 2 ATP + 2 H2O</text>
        <dbReference type="Rhea" id="RHEA:28202"/>
        <dbReference type="Rhea" id="RHEA-COMP:10002"/>
        <dbReference type="Rhea" id="RHEA-COMP:10004"/>
        <dbReference type="ChEBI" id="CHEBI:15377"/>
        <dbReference type="ChEBI" id="CHEBI:30616"/>
        <dbReference type="ChEBI" id="CHEBI:33722"/>
        <dbReference type="ChEBI" id="CHEBI:33723"/>
        <dbReference type="ChEBI" id="CHEBI:43474"/>
        <dbReference type="ChEBI" id="CHEBI:83348"/>
        <dbReference type="ChEBI" id="CHEBI:83350"/>
        <dbReference type="ChEBI" id="CHEBI:456216"/>
        <dbReference type="EC" id="1.3.7.7"/>
    </reaction>
</comment>
<comment type="cofactor">
    <cofactor evidence="1">
        <name>[4Fe-4S] cluster</name>
        <dbReference type="ChEBI" id="CHEBI:49883"/>
    </cofactor>
    <text evidence="1">Binds 1 [4Fe-4S] cluster per heterodimer. The cluster is bound at the heterodimer interface by residues from both subunits.</text>
</comment>
<comment type="pathway">
    <text evidence="1">Porphyrin-containing compound metabolism; bacteriochlorophyll biosynthesis (light-independent).</text>
</comment>
<comment type="subunit">
    <text evidence="1">Protochlorophyllide reductase is composed of three subunits; BchL, BchN and BchB. Forms a heterotetramer of two BchB and two BchN subunits.</text>
</comment>
<comment type="similarity">
    <text evidence="1">Belongs to the BchN/ChlN family.</text>
</comment>
<gene>
    <name evidence="1" type="primary">bchN</name>
</gene>
<organism>
    <name type="scientific">Acidiphilium rubrum</name>
    <dbReference type="NCBI Taxonomy" id="526"/>
    <lineage>
        <taxon>Bacteria</taxon>
        <taxon>Pseudomonadati</taxon>
        <taxon>Pseudomonadota</taxon>
        <taxon>Alphaproteobacteria</taxon>
        <taxon>Acetobacterales</taxon>
        <taxon>Acidocellaceae</taxon>
        <taxon>Acidiphilium</taxon>
    </lineage>
</organism>
<name>BCHN_ACIRU</name>
<sequence>MSVCTTAPSATAPDIIRQRGQRTVFCGLTGIVWLHRRIQDAFFLVVGSRTCAHLVQSAAGVMIFAEPRFATAIIEERDLAGRADLDDELDRVVTRLIERRPDIKLLFLVGSCPSEVIKLDLTRAAARLDERFGRLPRILAYSGSGIETTFTEGEDACLEALVPTLADAGSTTSLMVVGAVADIVEDQFRRLFTAIGIERVDFLPARHAGAMPAVGPHTKFILAQPFLAATARALHERGARRIAAPYPLGAEGTRLWIEAAAAAFGIDPARTESVLALPARRATESLAAVRAKLAGRKIFFFPDSQLEIPLARFLARECGVELVEVGTPFLHRDLMDAELALLPFATQLSEGQDVERQLDRCRAEQPDLVICGLGLANPLEAEGIATKWSIELVFSPIHGFEQAADLANLFARPLARRALLSV</sequence>
<reference key="1">
    <citation type="journal article" date="1999" name="J. Biol. Chem.">
        <title>Magnesium insertion by magnesium chelatase in the biosynthesis of zinc bacteriochlorophyll a in an aerobic acidophilic bacterium Acidiphilium rubrum.</title>
        <authorList>
            <person name="Masuda T."/>
            <person name="Inoue K."/>
            <person name="Masuda M."/>
            <person name="Nagayama M."/>
            <person name="Tamaki A."/>
            <person name="Ohta H."/>
            <person name="Shimada H."/>
            <person name="Takamiya K."/>
        </authorList>
    </citation>
    <scope>NUCLEOTIDE SEQUENCE [GENOMIC DNA]</scope>
</reference>
<evidence type="ECO:0000255" key="1">
    <source>
        <dbReference type="HAMAP-Rule" id="MF_00352"/>
    </source>
</evidence>
<accession>Q9WXB4</accession>
<feature type="chain" id="PRO_0000208592" description="Light-independent protochlorophyllide reductase subunit N">
    <location>
        <begin position="1"/>
        <end position="422"/>
    </location>
</feature>
<feature type="binding site" evidence="1">
    <location>
        <position position="26"/>
    </location>
    <ligand>
        <name>[4Fe-4S] cluster</name>
        <dbReference type="ChEBI" id="CHEBI:49883"/>
        <note>ligand shared with heterodimeric partner</note>
    </ligand>
</feature>
<feature type="binding site" evidence="1">
    <location>
        <position position="51"/>
    </location>
    <ligand>
        <name>[4Fe-4S] cluster</name>
        <dbReference type="ChEBI" id="CHEBI:49883"/>
        <note>ligand shared with heterodimeric partner</note>
    </ligand>
</feature>
<feature type="binding site" evidence="1">
    <location>
        <position position="112"/>
    </location>
    <ligand>
        <name>[4Fe-4S] cluster</name>
        <dbReference type="ChEBI" id="CHEBI:49883"/>
        <note>ligand shared with heterodimeric partner</note>
    </ligand>
</feature>
<protein>
    <recommendedName>
        <fullName evidence="1">Light-independent protochlorophyllide reductase subunit N</fullName>
        <shortName evidence="1">DPOR subunit N</shortName>
        <shortName evidence="1">LI-POR subunit N</shortName>
        <ecNumber evidence="1">1.3.7.7</ecNumber>
    </recommendedName>
</protein>